<reference key="1">
    <citation type="journal article" date="2005" name="Proc. Natl. Acad. Sci. U.S.A.">
        <title>Complete genome sequence of Vibrio fischeri: a symbiotic bacterium with pathogenic congeners.</title>
        <authorList>
            <person name="Ruby E.G."/>
            <person name="Urbanowski M."/>
            <person name="Campbell J."/>
            <person name="Dunn A."/>
            <person name="Faini M."/>
            <person name="Gunsalus R."/>
            <person name="Lostroh P."/>
            <person name="Lupp C."/>
            <person name="McCann J."/>
            <person name="Millikan D."/>
            <person name="Schaefer A."/>
            <person name="Stabb E."/>
            <person name="Stevens A."/>
            <person name="Visick K."/>
            <person name="Whistler C."/>
            <person name="Greenberg E.P."/>
        </authorList>
    </citation>
    <scope>NUCLEOTIDE SEQUENCE [LARGE SCALE GENOMIC DNA]</scope>
    <source>
        <strain>ATCC 700601 / ES114</strain>
    </source>
</reference>
<feature type="chain" id="PRO_1000077636" description="NH(3)-dependent NAD(+) synthetase">
    <location>
        <begin position="1"/>
        <end position="276"/>
    </location>
</feature>
<feature type="binding site" evidence="1">
    <location>
        <begin position="43"/>
        <end position="50"/>
    </location>
    <ligand>
        <name>ATP</name>
        <dbReference type="ChEBI" id="CHEBI:30616"/>
    </ligand>
</feature>
<feature type="binding site" evidence="1">
    <location>
        <position position="49"/>
    </location>
    <ligand>
        <name>Mg(2+)</name>
        <dbReference type="ChEBI" id="CHEBI:18420"/>
    </ligand>
</feature>
<feature type="binding site" evidence="1">
    <location>
        <position position="146"/>
    </location>
    <ligand>
        <name>deamido-NAD(+)</name>
        <dbReference type="ChEBI" id="CHEBI:58437"/>
    </ligand>
</feature>
<feature type="binding site" evidence="1">
    <location>
        <position position="166"/>
    </location>
    <ligand>
        <name>ATP</name>
        <dbReference type="ChEBI" id="CHEBI:30616"/>
    </ligand>
</feature>
<feature type="binding site" evidence="1">
    <location>
        <position position="171"/>
    </location>
    <ligand>
        <name>Mg(2+)</name>
        <dbReference type="ChEBI" id="CHEBI:18420"/>
    </ligand>
</feature>
<feature type="binding site" evidence="1">
    <location>
        <position position="179"/>
    </location>
    <ligand>
        <name>deamido-NAD(+)</name>
        <dbReference type="ChEBI" id="CHEBI:58437"/>
    </ligand>
</feature>
<feature type="binding site" evidence="1">
    <location>
        <position position="186"/>
    </location>
    <ligand>
        <name>deamido-NAD(+)</name>
        <dbReference type="ChEBI" id="CHEBI:58437"/>
    </ligand>
</feature>
<feature type="binding site" evidence="1">
    <location>
        <position position="195"/>
    </location>
    <ligand>
        <name>ATP</name>
        <dbReference type="ChEBI" id="CHEBI:30616"/>
    </ligand>
</feature>
<feature type="binding site" evidence="1">
    <location>
        <position position="217"/>
    </location>
    <ligand>
        <name>ATP</name>
        <dbReference type="ChEBI" id="CHEBI:30616"/>
    </ligand>
</feature>
<feature type="binding site" evidence="1">
    <location>
        <begin position="266"/>
        <end position="267"/>
    </location>
    <ligand>
        <name>deamido-NAD(+)</name>
        <dbReference type="ChEBI" id="CHEBI:58437"/>
    </ligand>
</feature>
<feature type="helix" evidence="2">
    <location>
        <begin position="1"/>
        <end position="9"/>
    </location>
</feature>
<feature type="helix" evidence="2">
    <location>
        <begin position="17"/>
        <end position="34"/>
    </location>
</feature>
<feature type="strand" evidence="2">
    <location>
        <begin position="39"/>
        <end position="44"/>
    </location>
</feature>
<feature type="helix" evidence="2">
    <location>
        <begin position="48"/>
        <end position="67"/>
    </location>
</feature>
<feature type="strand" evidence="2">
    <location>
        <begin position="74"/>
        <end position="79"/>
    </location>
</feature>
<feature type="strand" evidence="2">
    <location>
        <begin position="82"/>
        <end position="84"/>
    </location>
</feature>
<feature type="helix" evidence="2">
    <location>
        <begin position="88"/>
        <end position="97"/>
    </location>
</feature>
<feature type="strand" evidence="2">
    <location>
        <begin position="101"/>
        <end position="105"/>
    </location>
</feature>
<feature type="helix" evidence="2">
    <location>
        <begin position="109"/>
        <end position="122"/>
    </location>
</feature>
<feature type="turn" evidence="2">
    <location>
        <begin position="123"/>
        <end position="126"/>
    </location>
</feature>
<feature type="helix" evidence="2">
    <location>
        <begin position="133"/>
        <end position="159"/>
    </location>
</feature>
<feature type="strand" evidence="2">
    <location>
        <begin position="162"/>
        <end position="164"/>
    </location>
</feature>
<feature type="helix" evidence="2">
    <location>
        <begin position="169"/>
        <end position="172"/>
    </location>
</feature>
<feature type="turn" evidence="2">
    <location>
        <begin position="173"/>
        <end position="175"/>
    </location>
</feature>
<feature type="turn" evidence="2">
    <location>
        <begin position="179"/>
        <end position="183"/>
    </location>
</feature>
<feature type="turn" evidence="2">
    <location>
        <begin position="189"/>
        <end position="192"/>
    </location>
</feature>
<feature type="helix" evidence="2">
    <location>
        <begin position="195"/>
        <end position="204"/>
    </location>
</feature>
<feature type="helix" evidence="2">
    <location>
        <begin position="209"/>
        <end position="213"/>
    </location>
</feature>
<feature type="helix" evidence="2">
    <location>
        <begin position="237"/>
        <end position="244"/>
    </location>
</feature>
<feature type="helix" evidence="2">
    <location>
        <begin position="251"/>
        <end position="263"/>
    </location>
</feature>
<feature type="helix" evidence="2">
    <location>
        <begin position="265"/>
        <end position="268"/>
    </location>
</feature>
<dbReference type="EC" id="6.3.1.5" evidence="1"/>
<dbReference type="EMBL" id="CP000021">
    <property type="protein sequence ID" value="AAW87672.1"/>
    <property type="molecule type" value="Genomic_DNA"/>
</dbReference>
<dbReference type="RefSeq" id="WP_011263445.1">
    <property type="nucleotide sequence ID" value="NC_006841.2"/>
</dbReference>
<dbReference type="RefSeq" id="YP_206560.1">
    <property type="nucleotide sequence ID" value="NC_006841.2"/>
</dbReference>
<dbReference type="PDB" id="5WP0">
    <property type="method" value="X-ray"/>
    <property type="resolution" value="2.60 A"/>
    <property type="chains" value="A/B=1-276"/>
</dbReference>
<dbReference type="PDBsum" id="5WP0"/>
<dbReference type="SMR" id="Q5DZX4"/>
<dbReference type="STRING" id="312309.VF_A0602"/>
<dbReference type="EnsemblBacteria" id="AAW87672">
    <property type="protein sequence ID" value="AAW87672"/>
    <property type="gene ID" value="VF_A0602"/>
</dbReference>
<dbReference type="GeneID" id="54165926"/>
<dbReference type="KEGG" id="vfi:VF_A0602"/>
<dbReference type="PATRIC" id="fig|312309.11.peg.3207"/>
<dbReference type="eggNOG" id="COG0171">
    <property type="taxonomic scope" value="Bacteria"/>
</dbReference>
<dbReference type="HOGENOM" id="CLU_059327_3_0_6"/>
<dbReference type="OrthoDB" id="3266517at2"/>
<dbReference type="UniPathway" id="UPA00253">
    <property type="reaction ID" value="UER00333"/>
</dbReference>
<dbReference type="Proteomes" id="UP000000537">
    <property type="component" value="Chromosome II"/>
</dbReference>
<dbReference type="GO" id="GO:0005737">
    <property type="term" value="C:cytoplasm"/>
    <property type="evidence" value="ECO:0007669"/>
    <property type="project" value="InterPro"/>
</dbReference>
<dbReference type="GO" id="GO:0005524">
    <property type="term" value="F:ATP binding"/>
    <property type="evidence" value="ECO:0007669"/>
    <property type="project" value="UniProtKB-UniRule"/>
</dbReference>
<dbReference type="GO" id="GO:0004359">
    <property type="term" value="F:glutaminase activity"/>
    <property type="evidence" value="ECO:0007669"/>
    <property type="project" value="InterPro"/>
</dbReference>
<dbReference type="GO" id="GO:0046872">
    <property type="term" value="F:metal ion binding"/>
    <property type="evidence" value="ECO:0007669"/>
    <property type="project" value="UniProtKB-KW"/>
</dbReference>
<dbReference type="GO" id="GO:0003952">
    <property type="term" value="F:NAD+ synthase (glutamine-hydrolyzing) activity"/>
    <property type="evidence" value="ECO:0007669"/>
    <property type="project" value="InterPro"/>
</dbReference>
<dbReference type="GO" id="GO:0008795">
    <property type="term" value="F:NAD+ synthase activity"/>
    <property type="evidence" value="ECO:0007669"/>
    <property type="project" value="UniProtKB-UniRule"/>
</dbReference>
<dbReference type="GO" id="GO:0009435">
    <property type="term" value="P:NAD biosynthetic process"/>
    <property type="evidence" value="ECO:0007669"/>
    <property type="project" value="UniProtKB-UniRule"/>
</dbReference>
<dbReference type="CDD" id="cd00553">
    <property type="entry name" value="NAD_synthase"/>
    <property type="match status" value="1"/>
</dbReference>
<dbReference type="FunFam" id="3.40.50.620:FF:000015">
    <property type="entry name" value="NH(3)-dependent NAD(+) synthetase"/>
    <property type="match status" value="1"/>
</dbReference>
<dbReference type="Gene3D" id="3.40.50.620">
    <property type="entry name" value="HUPs"/>
    <property type="match status" value="1"/>
</dbReference>
<dbReference type="HAMAP" id="MF_00193">
    <property type="entry name" value="NadE_ammonia_dep"/>
    <property type="match status" value="1"/>
</dbReference>
<dbReference type="InterPro" id="IPR022310">
    <property type="entry name" value="NAD/GMP_synthase"/>
</dbReference>
<dbReference type="InterPro" id="IPR003694">
    <property type="entry name" value="NAD_synthase"/>
</dbReference>
<dbReference type="InterPro" id="IPR022926">
    <property type="entry name" value="NH(3)-dep_NAD(+)_synth"/>
</dbReference>
<dbReference type="InterPro" id="IPR014729">
    <property type="entry name" value="Rossmann-like_a/b/a_fold"/>
</dbReference>
<dbReference type="NCBIfam" id="TIGR00552">
    <property type="entry name" value="nadE"/>
    <property type="match status" value="1"/>
</dbReference>
<dbReference type="NCBIfam" id="NF001979">
    <property type="entry name" value="PRK00768.1"/>
    <property type="match status" value="1"/>
</dbReference>
<dbReference type="PANTHER" id="PTHR23090">
    <property type="entry name" value="NH 3 /GLUTAMINE-DEPENDENT NAD + SYNTHETASE"/>
    <property type="match status" value="1"/>
</dbReference>
<dbReference type="PANTHER" id="PTHR23090:SF7">
    <property type="entry name" value="NH(3)-DEPENDENT NAD(+) SYNTHETASE"/>
    <property type="match status" value="1"/>
</dbReference>
<dbReference type="Pfam" id="PF02540">
    <property type="entry name" value="NAD_synthase"/>
    <property type="match status" value="1"/>
</dbReference>
<dbReference type="SUPFAM" id="SSF52402">
    <property type="entry name" value="Adenine nucleotide alpha hydrolases-like"/>
    <property type="match status" value="1"/>
</dbReference>
<evidence type="ECO:0000255" key="1">
    <source>
        <dbReference type="HAMAP-Rule" id="MF_00193"/>
    </source>
</evidence>
<evidence type="ECO:0007829" key="2">
    <source>
        <dbReference type="PDB" id="5WP0"/>
    </source>
</evidence>
<protein>
    <recommendedName>
        <fullName evidence="1">NH(3)-dependent NAD(+) synthetase</fullName>
        <ecNumber evidence="1">6.3.1.5</ecNumber>
    </recommendedName>
</protein>
<comment type="function">
    <text evidence="1">Catalyzes the ATP-dependent amidation of deamido-NAD to form NAD. Uses ammonia as a nitrogen source.</text>
</comment>
<comment type="catalytic activity">
    <reaction evidence="1">
        <text>deamido-NAD(+) + NH4(+) + ATP = AMP + diphosphate + NAD(+) + H(+)</text>
        <dbReference type="Rhea" id="RHEA:21188"/>
        <dbReference type="ChEBI" id="CHEBI:15378"/>
        <dbReference type="ChEBI" id="CHEBI:28938"/>
        <dbReference type="ChEBI" id="CHEBI:30616"/>
        <dbReference type="ChEBI" id="CHEBI:33019"/>
        <dbReference type="ChEBI" id="CHEBI:57540"/>
        <dbReference type="ChEBI" id="CHEBI:58437"/>
        <dbReference type="ChEBI" id="CHEBI:456215"/>
        <dbReference type="EC" id="6.3.1.5"/>
    </reaction>
</comment>
<comment type="pathway">
    <text evidence="1">Cofactor biosynthesis; NAD(+) biosynthesis; NAD(+) from deamido-NAD(+) (ammonia route): step 1/1.</text>
</comment>
<comment type="subunit">
    <text evidence="1">Homodimer.</text>
</comment>
<comment type="similarity">
    <text evidence="1">Belongs to the NAD synthetase family.</text>
</comment>
<accession>Q5DZX4</accession>
<proteinExistence type="evidence at protein level"/>
<organism>
    <name type="scientific">Aliivibrio fischeri (strain ATCC 700601 / ES114)</name>
    <name type="common">Vibrio fischeri</name>
    <dbReference type="NCBI Taxonomy" id="312309"/>
    <lineage>
        <taxon>Bacteria</taxon>
        <taxon>Pseudomonadati</taxon>
        <taxon>Pseudomonadota</taxon>
        <taxon>Gammaproteobacteria</taxon>
        <taxon>Vibrionales</taxon>
        <taxon>Vibrionaceae</taxon>
        <taxon>Aliivibrio</taxon>
    </lineage>
</organism>
<name>NADE_ALIF1</name>
<gene>
    <name evidence="1" type="primary">nadE</name>
    <name type="ordered locus">VF_A0602</name>
</gene>
<sequence>MQQQIVEEMKVKVSIDPVEEIKKRVDFIKGKLLEAHCKSLILGISGGVDSTTCGRLAQLAVNELNLETQSSDYQFIAVRLPYGIQQDEDEAQLALQFIQPTHSISINIKNGVDGLHSANHIALKDTGLLPTDSAKIDFVKGNVKARARMIAQYEVAGYVGGLVLGTDHSAENITGFYTKFGDGACDLAPLFGLNKRQVREVAAQLGAPEQLVKKVPTADLEELAPQKADEDALSVSYDQIDDFLEGKKIDADAEDRLIKIYQMSQHKRKPIPTIYD</sequence>
<keyword id="KW-0002">3D-structure</keyword>
<keyword id="KW-0067">ATP-binding</keyword>
<keyword id="KW-0436">Ligase</keyword>
<keyword id="KW-0460">Magnesium</keyword>
<keyword id="KW-0479">Metal-binding</keyword>
<keyword id="KW-0520">NAD</keyword>
<keyword id="KW-0547">Nucleotide-binding</keyword>
<keyword id="KW-1185">Reference proteome</keyword>